<name>YBEY_STAA9</name>
<evidence type="ECO:0000255" key="1">
    <source>
        <dbReference type="HAMAP-Rule" id="MF_00009"/>
    </source>
</evidence>
<gene>
    <name evidence="1" type="primary">ybeY</name>
    <name type="ordered locus">SaurJH9_1628</name>
</gene>
<dbReference type="EC" id="3.1.-.-" evidence="1"/>
<dbReference type="EMBL" id="CP000703">
    <property type="protein sequence ID" value="ABQ49421.1"/>
    <property type="molecule type" value="Genomic_DNA"/>
</dbReference>
<dbReference type="RefSeq" id="WP_000494134.1">
    <property type="nucleotide sequence ID" value="NC_009487.1"/>
</dbReference>
<dbReference type="SMR" id="A5IT98"/>
<dbReference type="KEGG" id="saj:SaurJH9_1628"/>
<dbReference type="HOGENOM" id="CLU_106710_3_0_9"/>
<dbReference type="GO" id="GO:0005737">
    <property type="term" value="C:cytoplasm"/>
    <property type="evidence" value="ECO:0007669"/>
    <property type="project" value="UniProtKB-SubCell"/>
</dbReference>
<dbReference type="GO" id="GO:0004222">
    <property type="term" value="F:metalloendopeptidase activity"/>
    <property type="evidence" value="ECO:0007669"/>
    <property type="project" value="InterPro"/>
</dbReference>
<dbReference type="GO" id="GO:0004521">
    <property type="term" value="F:RNA endonuclease activity"/>
    <property type="evidence" value="ECO:0007669"/>
    <property type="project" value="UniProtKB-UniRule"/>
</dbReference>
<dbReference type="GO" id="GO:0008270">
    <property type="term" value="F:zinc ion binding"/>
    <property type="evidence" value="ECO:0007669"/>
    <property type="project" value="UniProtKB-UniRule"/>
</dbReference>
<dbReference type="GO" id="GO:0006364">
    <property type="term" value="P:rRNA processing"/>
    <property type="evidence" value="ECO:0007669"/>
    <property type="project" value="UniProtKB-UniRule"/>
</dbReference>
<dbReference type="Gene3D" id="3.40.390.30">
    <property type="entry name" value="Metalloproteases ('zincins'), catalytic domain"/>
    <property type="match status" value="1"/>
</dbReference>
<dbReference type="HAMAP" id="MF_00009">
    <property type="entry name" value="Endoribonucl_YbeY"/>
    <property type="match status" value="1"/>
</dbReference>
<dbReference type="InterPro" id="IPR023091">
    <property type="entry name" value="MetalPrtase_cat_dom_sf_prd"/>
</dbReference>
<dbReference type="InterPro" id="IPR002036">
    <property type="entry name" value="YbeY"/>
</dbReference>
<dbReference type="InterPro" id="IPR020549">
    <property type="entry name" value="YbeY_CS"/>
</dbReference>
<dbReference type="NCBIfam" id="TIGR00043">
    <property type="entry name" value="rRNA maturation RNase YbeY"/>
    <property type="match status" value="1"/>
</dbReference>
<dbReference type="PANTHER" id="PTHR46986">
    <property type="entry name" value="ENDORIBONUCLEASE YBEY, CHLOROPLASTIC"/>
    <property type="match status" value="1"/>
</dbReference>
<dbReference type="PANTHER" id="PTHR46986:SF1">
    <property type="entry name" value="ENDORIBONUCLEASE YBEY, CHLOROPLASTIC"/>
    <property type="match status" value="1"/>
</dbReference>
<dbReference type="Pfam" id="PF02130">
    <property type="entry name" value="YbeY"/>
    <property type="match status" value="1"/>
</dbReference>
<dbReference type="SUPFAM" id="SSF55486">
    <property type="entry name" value="Metalloproteases ('zincins'), catalytic domain"/>
    <property type="match status" value="1"/>
</dbReference>
<dbReference type="PROSITE" id="PS01306">
    <property type="entry name" value="UPF0054"/>
    <property type="match status" value="1"/>
</dbReference>
<sequence>MFTIDFSDHTGLVKDAWYKQIEDLLEFAKKEEHIEDDAELSVTFVDKQEIQEINRTYRDKDKVTDVISFALEEDEPEIDFSGLDIPRVLGDIIICTDVAQEQANNYGHSFERELGFLALHGFLHLLGYDHMTEADEKEMFGRQDTILNAYGLTRD</sequence>
<comment type="function">
    <text evidence="1">Single strand-specific metallo-endoribonuclease involved in late-stage 70S ribosome quality control and in maturation of the 3' terminus of the 16S rRNA.</text>
</comment>
<comment type="cofactor">
    <cofactor evidence="1">
        <name>Zn(2+)</name>
        <dbReference type="ChEBI" id="CHEBI:29105"/>
    </cofactor>
    <text evidence="1">Binds 1 zinc ion.</text>
</comment>
<comment type="subcellular location">
    <subcellularLocation>
        <location evidence="1">Cytoplasm</location>
    </subcellularLocation>
</comment>
<comment type="similarity">
    <text evidence="1">Belongs to the endoribonuclease YbeY family.</text>
</comment>
<feature type="chain" id="PRO_1000073921" description="Endoribonuclease YbeY">
    <location>
        <begin position="1"/>
        <end position="155"/>
    </location>
</feature>
<feature type="binding site" evidence="1">
    <location>
        <position position="120"/>
    </location>
    <ligand>
        <name>Zn(2+)</name>
        <dbReference type="ChEBI" id="CHEBI:29105"/>
        <note>catalytic</note>
    </ligand>
</feature>
<feature type="binding site" evidence="1">
    <location>
        <position position="124"/>
    </location>
    <ligand>
        <name>Zn(2+)</name>
        <dbReference type="ChEBI" id="CHEBI:29105"/>
        <note>catalytic</note>
    </ligand>
</feature>
<feature type="binding site" evidence="1">
    <location>
        <position position="130"/>
    </location>
    <ligand>
        <name>Zn(2+)</name>
        <dbReference type="ChEBI" id="CHEBI:29105"/>
        <note>catalytic</note>
    </ligand>
</feature>
<organism>
    <name type="scientific">Staphylococcus aureus (strain JH9)</name>
    <dbReference type="NCBI Taxonomy" id="359786"/>
    <lineage>
        <taxon>Bacteria</taxon>
        <taxon>Bacillati</taxon>
        <taxon>Bacillota</taxon>
        <taxon>Bacilli</taxon>
        <taxon>Bacillales</taxon>
        <taxon>Staphylococcaceae</taxon>
        <taxon>Staphylococcus</taxon>
    </lineage>
</organism>
<proteinExistence type="inferred from homology"/>
<keyword id="KW-0963">Cytoplasm</keyword>
<keyword id="KW-0255">Endonuclease</keyword>
<keyword id="KW-0378">Hydrolase</keyword>
<keyword id="KW-0479">Metal-binding</keyword>
<keyword id="KW-0540">Nuclease</keyword>
<keyword id="KW-0690">Ribosome biogenesis</keyword>
<keyword id="KW-0698">rRNA processing</keyword>
<keyword id="KW-0862">Zinc</keyword>
<protein>
    <recommendedName>
        <fullName evidence="1">Endoribonuclease YbeY</fullName>
        <ecNumber evidence="1">3.1.-.-</ecNumber>
    </recommendedName>
</protein>
<accession>A5IT98</accession>
<reference key="1">
    <citation type="submission" date="2007-05" db="EMBL/GenBank/DDBJ databases">
        <title>Complete sequence of chromosome of Staphylococcus aureus subsp. aureus JH9.</title>
        <authorList>
            <consortium name="US DOE Joint Genome Institute"/>
            <person name="Copeland A."/>
            <person name="Lucas S."/>
            <person name="Lapidus A."/>
            <person name="Barry K."/>
            <person name="Detter J.C."/>
            <person name="Glavina del Rio T."/>
            <person name="Hammon N."/>
            <person name="Israni S."/>
            <person name="Pitluck S."/>
            <person name="Chain P."/>
            <person name="Malfatti S."/>
            <person name="Shin M."/>
            <person name="Vergez L."/>
            <person name="Schmutz J."/>
            <person name="Larimer F."/>
            <person name="Land M."/>
            <person name="Hauser L."/>
            <person name="Kyrpides N."/>
            <person name="Kim E."/>
            <person name="Tomasz A."/>
            <person name="Richardson P."/>
        </authorList>
    </citation>
    <scope>NUCLEOTIDE SEQUENCE [LARGE SCALE GENOMIC DNA]</scope>
    <source>
        <strain>JH9</strain>
    </source>
</reference>